<evidence type="ECO:0000255" key="1"/>
<evidence type="ECO:0000255" key="2">
    <source>
        <dbReference type="PROSITE-ProRule" id="PRU00850"/>
    </source>
</evidence>
<evidence type="ECO:0000255" key="3">
    <source>
        <dbReference type="PROSITE-ProRule" id="PRU01025"/>
    </source>
</evidence>
<evidence type="ECO:0000256" key="4">
    <source>
        <dbReference type="SAM" id="MobiDB-lite"/>
    </source>
</evidence>
<evidence type="ECO:0000305" key="5"/>
<sequence>MDVLGENEALQQFFEAQGASGTLENPALDTSLLEEFLGNDFDLGALQRQLPDTPPYSASDPRSPPQVKGACCRTPRPPAGRIPAAFLHSTTAPGPLPEHPSQSMAGQTHSSFQNGYPESSHPATCRHQTGPSRLGTSCSFHQQPLCHVPGSSLPPTKKRKHSQIQEDSWDCSSWAHYFRPMTTRSQSIEVQDHDREGRNGMPVDQCSPALKWQPYQSVPWHSLLNSRYEKLPEVGYQVVTDKGFTFSPVDEAFVCQKKNHFQITVHIQVWGSPKFVKTQVGLKPIEKFYLKAFGIKVEATNQVIAIEQSQADRSKKTFDPVKIDLLTDQVTKVTLGRLHFSETTANNMRKKGKPNPDQRYFMLVVGLYAANQDQFYLLAAHISERIIVRASNPGQFENDSDALWQRGQVPESIVCHGRVGINTDTPDEALVVCGNMKVMGTVMHPSDSRVKENIQEVDTNEQLRRIAQMRIVQYDYKPEFASAMGINTAHQTGMIAQEVQEILPRAVREVGDVTGGNGETLENFLMVDKDQIFMENVGAVKQLCKLTNNLEERIEELEIWNKKLARLKRLSSSWKSSISEASSISKLSRAVSASSARRTGSKKPTKVSFSGRKQSCPNWVFQTLVVVLIAVMAFCALTIVALYILSLKDQDRRSPNLPLSNMTSSPEPALSSTAPTSAPHTTPETTQTSLQVPEITFCEILPCQETYCCPVWGPRILFSSPAQRQLEAEREIHQRQWAEDKSKSFLTSSALISPDWESDWIDTTIASIQIVEIQQMIDRRYCSRMLHCGPGHYNYNIPVNKNTPTNVKFSLEINTTEPLIVFQCKYTLGNICFRSQRERTQSDGEDAQMTQGYQHIWRLPVARFSDSAYHFRVAAPDLADCSTDPFFAGIFFTDYFFYFYRRCN</sequence>
<accession>Q3UN70</accession>
<accession>Q3UN89</accession>
<protein>
    <recommendedName>
        <fullName>Myelin regulatory factor-like protein</fullName>
    </recommendedName>
</protein>
<feature type="chain" id="PRO_0000420956" description="Myelin regulatory factor-like protein">
    <location>
        <begin position="1"/>
        <end position="904"/>
    </location>
</feature>
<feature type="transmembrane region" description="Helical" evidence="1">
    <location>
        <begin position="624"/>
        <end position="644"/>
    </location>
</feature>
<feature type="domain" description="Peptidase S74" evidence="3">
    <location>
        <begin position="446"/>
        <end position="554"/>
    </location>
</feature>
<feature type="DNA-binding region" description="NDT80" evidence="2">
    <location>
        <begin position="108"/>
        <end position="400"/>
    </location>
</feature>
<feature type="region of interest" description="Disordered" evidence="4">
    <location>
        <begin position="46"/>
        <end position="132"/>
    </location>
</feature>
<feature type="region of interest" description="Disordered" evidence="4">
    <location>
        <begin position="656"/>
        <end position="688"/>
    </location>
</feature>
<feature type="coiled-coil region" evidence="1">
    <location>
        <begin position="538"/>
        <end position="575"/>
    </location>
</feature>
<feature type="compositionally biased region" description="Polar residues" evidence="4">
    <location>
        <begin position="100"/>
        <end position="117"/>
    </location>
</feature>
<feature type="compositionally biased region" description="Low complexity" evidence="4">
    <location>
        <begin position="663"/>
        <end position="688"/>
    </location>
</feature>
<feature type="sequence conflict" description="In Ref. 1; BAE25858." evidence="5" ref="1">
    <original>T</original>
    <variation>N</variation>
    <location>
        <position position="682"/>
    </location>
</feature>
<organism>
    <name type="scientific">Mus musculus</name>
    <name type="common">Mouse</name>
    <dbReference type="NCBI Taxonomy" id="10090"/>
    <lineage>
        <taxon>Eukaryota</taxon>
        <taxon>Metazoa</taxon>
        <taxon>Chordata</taxon>
        <taxon>Craniata</taxon>
        <taxon>Vertebrata</taxon>
        <taxon>Euteleostomi</taxon>
        <taxon>Mammalia</taxon>
        <taxon>Eutheria</taxon>
        <taxon>Euarchontoglires</taxon>
        <taxon>Glires</taxon>
        <taxon>Rodentia</taxon>
        <taxon>Myomorpha</taxon>
        <taxon>Muroidea</taxon>
        <taxon>Muridae</taxon>
        <taxon>Murinae</taxon>
        <taxon>Mus</taxon>
        <taxon>Mus</taxon>
    </lineage>
</organism>
<reference key="1">
    <citation type="journal article" date="2005" name="Science">
        <title>The transcriptional landscape of the mammalian genome.</title>
        <authorList>
            <person name="Carninci P."/>
            <person name="Kasukawa T."/>
            <person name="Katayama S."/>
            <person name="Gough J."/>
            <person name="Frith M.C."/>
            <person name="Maeda N."/>
            <person name="Oyama R."/>
            <person name="Ravasi T."/>
            <person name="Lenhard B."/>
            <person name="Wells C."/>
            <person name="Kodzius R."/>
            <person name="Shimokawa K."/>
            <person name="Bajic V.B."/>
            <person name="Brenner S.E."/>
            <person name="Batalov S."/>
            <person name="Forrest A.R."/>
            <person name="Zavolan M."/>
            <person name="Davis M.J."/>
            <person name="Wilming L.G."/>
            <person name="Aidinis V."/>
            <person name="Allen J.E."/>
            <person name="Ambesi-Impiombato A."/>
            <person name="Apweiler R."/>
            <person name="Aturaliya R.N."/>
            <person name="Bailey T.L."/>
            <person name="Bansal M."/>
            <person name="Baxter L."/>
            <person name="Beisel K.W."/>
            <person name="Bersano T."/>
            <person name="Bono H."/>
            <person name="Chalk A.M."/>
            <person name="Chiu K.P."/>
            <person name="Choudhary V."/>
            <person name="Christoffels A."/>
            <person name="Clutterbuck D.R."/>
            <person name="Crowe M.L."/>
            <person name="Dalla E."/>
            <person name="Dalrymple B.P."/>
            <person name="de Bono B."/>
            <person name="Della Gatta G."/>
            <person name="di Bernardo D."/>
            <person name="Down T."/>
            <person name="Engstrom P."/>
            <person name="Fagiolini M."/>
            <person name="Faulkner G."/>
            <person name="Fletcher C.F."/>
            <person name="Fukushima T."/>
            <person name="Furuno M."/>
            <person name="Futaki S."/>
            <person name="Gariboldi M."/>
            <person name="Georgii-Hemming P."/>
            <person name="Gingeras T.R."/>
            <person name="Gojobori T."/>
            <person name="Green R.E."/>
            <person name="Gustincich S."/>
            <person name="Harbers M."/>
            <person name="Hayashi Y."/>
            <person name="Hensch T.K."/>
            <person name="Hirokawa N."/>
            <person name="Hill D."/>
            <person name="Huminiecki L."/>
            <person name="Iacono M."/>
            <person name="Ikeo K."/>
            <person name="Iwama A."/>
            <person name="Ishikawa T."/>
            <person name="Jakt M."/>
            <person name="Kanapin A."/>
            <person name="Katoh M."/>
            <person name="Kawasawa Y."/>
            <person name="Kelso J."/>
            <person name="Kitamura H."/>
            <person name="Kitano H."/>
            <person name="Kollias G."/>
            <person name="Krishnan S.P."/>
            <person name="Kruger A."/>
            <person name="Kummerfeld S.K."/>
            <person name="Kurochkin I.V."/>
            <person name="Lareau L.F."/>
            <person name="Lazarevic D."/>
            <person name="Lipovich L."/>
            <person name="Liu J."/>
            <person name="Liuni S."/>
            <person name="McWilliam S."/>
            <person name="Madan Babu M."/>
            <person name="Madera M."/>
            <person name="Marchionni L."/>
            <person name="Matsuda H."/>
            <person name="Matsuzawa S."/>
            <person name="Miki H."/>
            <person name="Mignone F."/>
            <person name="Miyake S."/>
            <person name="Morris K."/>
            <person name="Mottagui-Tabar S."/>
            <person name="Mulder N."/>
            <person name="Nakano N."/>
            <person name="Nakauchi H."/>
            <person name="Ng P."/>
            <person name="Nilsson R."/>
            <person name="Nishiguchi S."/>
            <person name="Nishikawa S."/>
            <person name="Nori F."/>
            <person name="Ohara O."/>
            <person name="Okazaki Y."/>
            <person name="Orlando V."/>
            <person name="Pang K.C."/>
            <person name="Pavan W.J."/>
            <person name="Pavesi G."/>
            <person name="Pesole G."/>
            <person name="Petrovsky N."/>
            <person name="Piazza S."/>
            <person name="Reed J."/>
            <person name="Reid J.F."/>
            <person name="Ring B.Z."/>
            <person name="Ringwald M."/>
            <person name="Rost B."/>
            <person name="Ruan Y."/>
            <person name="Salzberg S.L."/>
            <person name="Sandelin A."/>
            <person name="Schneider C."/>
            <person name="Schoenbach C."/>
            <person name="Sekiguchi K."/>
            <person name="Semple C.A."/>
            <person name="Seno S."/>
            <person name="Sessa L."/>
            <person name="Sheng Y."/>
            <person name="Shibata Y."/>
            <person name="Shimada H."/>
            <person name="Shimada K."/>
            <person name="Silva D."/>
            <person name="Sinclair B."/>
            <person name="Sperling S."/>
            <person name="Stupka E."/>
            <person name="Sugiura K."/>
            <person name="Sultana R."/>
            <person name="Takenaka Y."/>
            <person name="Taki K."/>
            <person name="Tammoja K."/>
            <person name="Tan S.L."/>
            <person name="Tang S."/>
            <person name="Taylor M.S."/>
            <person name="Tegner J."/>
            <person name="Teichmann S.A."/>
            <person name="Ueda H.R."/>
            <person name="van Nimwegen E."/>
            <person name="Verardo R."/>
            <person name="Wei C.L."/>
            <person name="Yagi K."/>
            <person name="Yamanishi H."/>
            <person name="Zabarovsky E."/>
            <person name="Zhu S."/>
            <person name="Zimmer A."/>
            <person name="Hide W."/>
            <person name="Bult C."/>
            <person name="Grimmond S.M."/>
            <person name="Teasdale R.D."/>
            <person name="Liu E.T."/>
            <person name="Brusic V."/>
            <person name="Quackenbush J."/>
            <person name="Wahlestedt C."/>
            <person name="Mattick J.S."/>
            <person name="Hume D.A."/>
            <person name="Kai C."/>
            <person name="Sasaki D."/>
            <person name="Tomaru Y."/>
            <person name="Fukuda S."/>
            <person name="Kanamori-Katayama M."/>
            <person name="Suzuki M."/>
            <person name="Aoki J."/>
            <person name="Arakawa T."/>
            <person name="Iida J."/>
            <person name="Imamura K."/>
            <person name="Itoh M."/>
            <person name="Kato T."/>
            <person name="Kawaji H."/>
            <person name="Kawagashira N."/>
            <person name="Kawashima T."/>
            <person name="Kojima M."/>
            <person name="Kondo S."/>
            <person name="Konno H."/>
            <person name="Nakano K."/>
            <person name="Ninomiya N."/>
            <person name="Nishio T."/>
            <person name="Okada M."/>
            <person name="Plessy C."/>
            <person name="Shibata K."/>
            <person name="Shiraki T."/>
            <person name="Suzuki S."/>
            <person name="Tagami M."/>
            <person name="Waki K."/>
            <person name="Watahiki A."/>
            <person name="Okamura-Oho Y."/>
            <person name="Suzuki H."/>
            <person name="Kawai J."/>
            <person name="Hayashizaki Y."/>
        </authorList>
    </citation>
    <scope>NUCLEOTIDE SEQUENCE [LARGE SCALE MRNA]</scope>
    <source>
        <strain>C57BL/6J</strain>
        <tissue>Intestinal mucosa</tissue>
    </source>
</reference>
<reference key="2">
    <citation type="journal article" date="2009" name="PLoS Biol.">
        <title>Lineage-specific biology revealed by a finished genome assembly of the mouse.</title>
        <authorList>
            <person name="Church D.M."/>
            <person name="Goodstadt L."/>
            <person name="Hillier L.W."/>
            <person name="Zody M.C."/>
            <person name="Goldstein S."/>
            <person name="She X."/>
            <person name="Bult C.J."/>
            <person name="Agarwala R."/>
            <person name="Cherry J.L."/>
            <person name="DiCuccio M."/>
            <person name="Hlavina W."/>
            <person name="Kapustin Y."/>
            <person name="Meric P."/>
            <person name="Maglott D."/>
            <person name="Birtle Z."/>
            <person name="Marques A.C."/>
            <person name="Graves T."/>
            <person name="Zhou S."/>
            <person name="Teague B."/>
            <person name="Potamousis K."/>
            <person name="Churas C."/>
            <person name="Place M."/>
            <person name="Herschleb J."/>
            <person name="Runnheim R."/>
            <person name="Forrest D."/>
            <person name="Amos-Landgraf J."/>
            <person name="Schwartz D.C."/>
            <person name="Cheng Z."/>
            <person name="Lindblad-Toh K."/>
            <person name="Eichler E.E."/>
            <person name="Ponting C.P."/>
        </authorList>
    </citation>
    <scope>NUCLEOTIDE SEQUENCE [LARGE SCALE GENOMIC DNA]</scope>
    <source>
        <strain>C57BL/6J</strain>
    </source>
</reference>
<reference key="3">
    <citation type="journal article" date="2004" name="Genome Res.">
        <title>The status, quality, and expansion of the NIH full-length cDNA project: the Mammalian Gene Collection (MGC).</title>
        <authorList>
            <consortium name="The MGC Project Team"/>
        </authorList>
    </citation>
    <scope>NUCLEOTIDE SEQUENCE [LARGE SCALE MRNA]</scope>
    <source>
        <tissue>Testis</tissue>
    </source>
</reference>
<dbReference type="EMBL" id="AK144411">
    <property type="protein sequence ID" value="BAE25877.1"/>
    <property type="molecule type" value="mRNA"/>
</dbReference>
<dbReference type="EMBL" id="AK144383">
    <property type="protein sequence ID" value="BAE25858.1"/>
    <property type="molecule type" value="mRNA"/>
</dbReference>
<dbReference type="EMBL" id="AC123720">
    <property type="status" value="NOT_ANNOTATED_CDS"/>
    <property type="molecule type" value="Genomic_DNA"/>
</dbReference>
<dbReference type="EMBL" id="AC132304">
    <property type="status" value="NOT_ANNOTATED_CDS"/>
    <property type="molecule type" value="Genomic_DNA"/>
</dbReference>
<dbReference type="EMBL" id="BC150915">
    <property type="protein sequence ID" value="AAI50916.1"/>
    <property type="molecule type" value="mRNA"/>
</dbReference>
<dbReference type="EMBL" id="BC150923">
    <property type="protein sequence ID" value="AAI50924.1"/>
    <property type="molecule type" value="mRNA"/>
</dbReference>
<dbReference type="CCDS" id="CCDS36066.1"/>
<dbReference type="RefSeq" id="NP_001028505.1">
    <property type="nucleotide sequence ID" value="NM_001033333.3"/>
</dbReference>
<dbReference type="SMR" id="Q3UN70"/>
<dbReference type="FunCoup" id="Q3UN70">
    <property type="interactions" value="522"/>
</dbReference>
<dbReference type="STRING" id="10090.ENSMUSP00000037477"/>
<dbReference type="iPTMnet" id="Q3UN70"/>
<dbReference type="PhosphoSitePlus" id="Q3UN70"/>
<dbReference type="PaxDb" id="10090-ENSMUSP00000037477"/>
<dbReference type="ProteomicsDB" id="291400"/>
<dbReference type="Antibodypedia" id="62193">
    <property type="antibodies" value="5 antibodies from 5 providers"/>
</dbReference>
<dbReference type="Ensembl" id="ENSMUST00000048229.9">
    <property type="protein sequence ID" value="ENSMUSP00000037477.8"/>
    <property type="gene ID" value="ENSMUSG00000034057.9"/>
</dbReference>
<dbReference type="GeneID" id="237558"/>
<dbReference type="KEGG" id="mmu:237558"/>
<dbReference type="UCSC" id="uc007hci.1">
    <property type="organism name" value="mouse"/>
</dbReference>
<dbReference type="AGR" id="MGI:2685085"/>
<dbReference type="CTD" id="196446"/>
<dbReference type="MGI" id="MGI:2685085">
    <property type="gene designation" value="Myrfl"/>
</dbReference>
<dbReference type="VEuPathDB" id="HostDB:ENSMUSG00000034057"/>
<dbReference type="eggNOG" id="KOG3661">
    <property type="taxonomic scope" value="Eukaryota"/>
</dbReference>
<dbReference type="GeneTree" id="ENSGT00530000063626"/>
<dbReference type="HOGENOM" id="CLU_004919_1_0_1"/>
<dbReference type="InParanoid" id="Q3UN70"/>
<dbReference type="OMA" id="CHNPGAS"/>
<dbReference type="OrthoDB" id="27041at2759"/>
<dbReference type="PhylomeDB" id="Q3UN70"/>
<dbReference type="TreeFam" id="TF312888"/>
<dbReference type="BioGRID-ORCS" id="237558">
    <property type="hits" value="1 hit in 76 CRISPR screens"/>
</dbReference>
<dbReference type="ChiTaRS" id="Myrfl">
    <property type="organism name" value="mouse"/>
</dbReference>
<dbReference type="PRO" id="PR:Q3UN70"/>
<dbReference type="Proteomes" id="UP000000589">
    <property type="component" value="Chromosome 10"/>
</dbReference>
<dbReference type="RNAct" id="Q3UN70">
    <property type="molecule type" value="protein"/>
</dbReference>
<dbReference type="Bgee" id="ENSMUSG00000034057">
    <property type="expression patterns" value="Expressed in paneth cell and 36 other cell types or tissues"/>
</dbReference>
<dbReference type="GO" id="GO:0016020">
    <property type="term" value="C:membrane"/>
    <property type="evidence" value="ECO:0007669"/>
    <property type="project" value="UniProtKB-SubCell"/>
</dbReference>
<dbReference type="GO" id="GO:0003677">
    <property type="term" value="F:DNA binding"/>
    <property type="evidence" value="ECO:0007669"/>
    <property type="project" value="UniProtKB-KW"/>
</dbReference>
<dbReference type="GO" id="GO:0003700">
    <property type="term" value="F:DNA-binding transcription factor activity"/>
    <property type="evidence" value="ECO:0007669"/>
    <property type="project" value="InterPro"/>
</dbReference>
<dbReference type="GO" id="GO:0016540">
    <property type="term" value="P:protein autoprocessing"/>
    <property type="evidence" value="ECO:0007669"/>
    <property type="project" value="InterPro"/>
</dbReference>
<dbReference type="FunFam" id="2.60.40.1390:FF:000009">
    <property type="entry name" value="Myelin regulatory factor like"/>
    <property type="match status" value="1"/>
</dbReference>
<dbReference type="Gene3D" id="2.60.40.1390">
    <property type="entry name" value="NDT80 DNA-binding domain"/>
    <property type="match status" value="1"/>
</dbReference>
<dbReference type="InterPro" id="IPR051577">
    <property type="entry name" value="MRF-like"/>
</dbReference>
<dbReference type="InterPro" id="IPR025719">
    <property type="entry name" value="MYRF_C2"/>
</dbReference>
<dbReference type="InterPro" id="IPR026932">
    <property type="entry name" value="MYRF_ICA"/>
</dbReference>
<dbReference type="InterPro" id="IPR024061">
    <property type="entry name" value="NDT80_DNA-bd_dom"/>
</dbReference>
<dbReference type="InterPro" id="IPR037141">
    <property type="entry name" value="NDT80_DNA-bd_dom_sf"/>
</dbReference>
<dbReference type="InterPro" id="IPR008967">
    <property type="entry name" value="p53-like_TF_DNA-bd_sf"/>
</dbReference>
<dbReference type="InterPro" id="IPR030392">
    <property type="entry name" value="S74_ICA"/>
</dbReference>
<dbReference type="PANTHER" id="PTHR13029">
    <property type="match status" value="1"/>
</dbReference>
<dbReference type="PANTHER" id="PTHR13029:SF17">
    <property type="entry name" value="MYELIN REGULATORY FACTOR-LIKE PROTEIN"/>
    <property type="match status" value="1"/>
</dbReference>
<dbReference type="Pfam" id="PF13888">
    <property type="entry name" value="MRF_C2"/>
    <property type="match status" value="1"/>
</dbReference>
<dbReference type="Pfam" id="PF13887">
    <property type="entry name" value="MYRF_ICA"/>
    <property type="match status" value="1"/>
</dbReference>
<dbReference type="Pfam" id="PF05224">
    <property type="entry name" value="NDT80_PhoG"/>
    <property type="match status" value="1"/>
</dbReference>
<dbReference type="Pfam" id="PF13884">
    <property type="entry name" value="Peptidase_S74"/>
    <property type="match status" value="1"/>
</dbReference>
<dbReference type="SUPFAM" id="SSF49417">
    <property type="entry name" value="p53-like transcription factors"/>
    <property type="match status" value="1"/>
</dbReference>
<dbReference type="PROSITE" id="PS51688">
    <property type="entry name" value="ICA"/>
    <property type="match status" value="1"/>
</dbReference>
<dbReference type="PROSITE" id="PS51517">
    <property type="entry name" value="NDT80"/>
    <property type="match status" value="1"/>
</dbReference>
<keyword id="KW-0175">Coiled coil</keyword>
<keyword id="KW-0238">DNA-binding</keyword>
<keyword id="KW-0472">Membrane</keyword>
<keyword id="KW-1185">Reference proteome</keyword>
<keyword id="KW-0812">Transmembrane</keyword>
<keyword id="KW-1133">Transmembrane helix</keyword>
<comment type="subcellular location">
    <subcellularLocation>
        <location evidence="5">Membrane</location>
        <topology evidence="5">Single-pass membrane protein</topology>
    </subcellularLocation>
</comment>
<comment type="similarity">
    <text evidence="5">Belongs to the MRF family.</text>
</comment>
<proteinExistence type="evidence at transcript level"/>
<gene>
    <name type="primary">Myrfl</name>
    <name type="synonym">Gm239</name>
</gene>
<name>MRFL_MOUSE</name>